<keyword id="KW-0496">Mitochondrion</keyword>
<keyword id="KW-1185">Reference proteome</keyword>
<keyword id="KW-0687">Ribonucleoprotein</keyword>
<keyword id="KW-0689">Ribosomal protein</keyword>
<keyword id="KW-0809">Transit peptide</keyword>
<reference key="1">
    <citation type="journal article" date="2005" name="Nature">
        <title>The genome of the social amoeba Dictyostelium discoideum.</title>
        <authorList>
            <person name="Eichinger L."/>
            <person name="Pachebat J.A."/>
            <person name="Gloeckner G."/>
            <person name="Rajandream M.A."/>
            <person name="Sucgang R."/>
            <person name="Berriman M."/>
            <person name="Song J."/>
            <person name="Olsen R."/>
            <person name="Szafranski K."/>
            <person name="Xu Q."/>
            <person name="Tunggal B."/>
            <person name="Kummerfeld S."/>
            <person name="Madera M."/>
            <person name="Konfortov B.A."/>
            <person name="Rivero F."/>
            <person name="Bankier A.T."/>
            <person name="Lehmann R."/>
            <person name="Hamlin N."/>
            <person name="Davies R."/>
            <person name="Gaudet P."/>
            <person name="Fey P."/>
            <person name="Pilcher K."/>
            <person name="Chen G."/>
            <person name="Saunders D."/>
            <person name="Sodergren E.J."/>
            <person name="Davis P."/>
            <person name="Kerhornou A."/>
            <person name="Nie X."/>
            <person name="Hall N."/>
            <person name="Anjard C."/>
            <person name="Hemphill L."/>
            <person name="Bason N."/>
            <person name="Farbrother P."/>
            <person name="Desany B."/>
            <person name="Just E."/>
            <person name="Morio T."/>
            <person name="Rost R."/>
            <person name="Churcher C.M."/>
            <person name="Cooper J."/>
            <person name="Haydock S."/>
            <person name="van Driessche N."/>
            <person name="Cronin A."/>
            <person name="Goodhead I."/>
            <person name="Muzny D.M."/>
            <person name="Mourier T."/>
            <person name="Pain A."/>
            <person name="Lu M."/>
            <person name="Harper D."/>
            <person name="Lindsay R."/>
            <person name="Hauser H."/>
            <person name="James K.D."/>
            <person name="Quiles M."/>
            <person name="Madan Babu M."/>
            <person name="Saito T."/>
            <person name="Buchrieser C."/>
            <person name="Wardroper A."/>
            <person name="Felder M."/>
            <person name="Thangavelu M."/>
            <person name="Johnson D."/>
            <person name="Knights A."/>
            <person name="Loulseged H."/>
            <person name="Mungall K.L."/>
            <person name="Oliver K."/>
            <person name="Price C."/>
            <person name="Quail M.A."/>
            <person name="Urushihara H."/>
            <person name="Hernandez J."/>
            <person name="Rabbinowitsch E."/>
            <person name="Steffen D."/>
            <person name="Sanders M."/>
            <person name="Ma J."/>
            <person name="Kohara Y."/>
            <person name="Sharp S."/>
            <person name="Simmonds M.N."/>
            <person name="Spiegler S."/>
            <person name="Tivey A."/>
            <person name="Sugano S."/>
            <person name="White B."/>
            <person name="Walker D."/>
            <person name="Woodward J.R."/>
            <person name="Winckler T."/>
            <person name="Tanaka Y."/>
            <person name="Shaulsky G."/>
            <person name="Schleicher M."/>
            <person name="Weinstock G.M."/>
            <person name="Rosenthal A."/>
            <person name="Cox E.C."/>
            <person name="Chisholm R.L."/>
            <person name="Gibbs R.A."/>
            <person name="Loomis W.F."/>
            <person name="Platzer M."/>
            <person name="Kay R.R."/>
            <person name="Williams J.G."/>
            <person name="Dear P.H."/>
            <person name="Noegel A.A."/>
            <person name="Barrell B.G."/>
            <person name="Kuspa A."/>
        </authorList>
    </citation>
    <scope>NUCLEOTIDE SEQUENCE [LARGE SCALE GENOMIC DNA]</scope>
    <source>
        <strain>AX4</strain>
    </source>
</reference>
<comment type="subcellular location">
    <subcellularLocation>
        <location evidence="1">Mitochondrion</location>
    </subcellularLocation>
</comment>
<comment type="similarity">
    <text evidence="3">Belongs to the bacterial ribosomal protein bL21 family.</text>
</comment>
<name>RM21_DICDI</name>
<organism>
    <name type="scientific">Dictyostelium discoideum</name>
    <name type="common">Social amoeba</name>
    <dbReference type="NCBI Taxonomy" id="44689"/>
    <lineage>
        <taxon>Eukaryota</taxon>
        <taxon>Amoebozoa</taxon>
        <taxon>Evosea</taxon>
        <taxon>Eumycetozoa</taxon>
        <taxon>Dictyostelia</taxon>
        <taxon>Dictyosteliales</taxon>
        <taxon>Dictyosteliaceae</taxon>
        <taxon>Dictyostelium</taxon>
    </lineage>
</organism>
<gene>
    <name type="primary">mrpl21</name>
    <name type="ORF">DDB_G0288799</name>
</gene>
<protein>
    <recommendedName>
        <fullName evidence="3">Large ribosomal subunit protein bL21m</fullName>
    </recommendedName>
    <alternativeName>
        <fullName evidence="3">39S ribosomal protein L21, mitochondrial</fullName>
        <shortName>L21mt</shortName>
        <shortName>MRP-L21</shortName>
    </alternativeName>
</protein>
<feature type="transit peptide" description="Mitochondrion" evidence="2">
    <location>
        <begin position="1"/>
        <end position="20"/>
    </location>
</feature>
<feature type="chain" id="PRO_0000325945" description="Large ribosomal subunit protein bL21m">
    <location>
        <begin position="21"/>
        <end position="172"/>
    </location>
</feature>
<evidence type="ECO:0000250" key="1"/>
<evidence type="ECO:0000255" key="2"/>
<evidence type="ECO:0000305" key="3"/>
<accession>Q54IF0</accession>
<sequence length="172" mass="19310">MIRNIGSNLMKSSSSILLRNQQQQTNKLLFRNFTSIPEAVAVTSEESYNSKNQFTPIGKDSFAVVHISGKQYKVIEGDIIMTDKIQVDVGEHIVLDKVLLVGTKNETIIGKPIISNFKVHAYIEEQAKTEHVTIFKHKPRKNYKRTTGFQGLATYIRIGGIIKGQETTTTTN</sequence>
<dbReference type="EMBL" id="AAFI02000125">
    <property type="protein sequence ID" value="EAL63021.1"/>
    <property type="molecule type" value="Genomic_DNA"/>
</dbReference>
<dbReference type="RefSeq" id="XP_636527.1">
    <property type="nucleotide sequence ID" value="XM_631435.1"/>
</dbReference>
<dbReference type="SMR" id="Q54IF0"/>
<dbReference type="FunCoup" id="Q54IF0">
    <property type="interactions" value="162"/>
</dbReference>
<dbReference type="STRING" id="44689.Q54IF0"/>
<dbReference type="PaxDb" id="44689-DDB0267021"/>
<dbReference type="EnsemblProtists" id="EAL63021">
    <property type="protein sequence ID" value="EAL63021"/>
    <property type="gene ID" value="DDB_G0288799"/>
</dbReference>
<dbReference type="GeneID" id="8626812"/>
<dbReference type="KEGG" id="ddi:DDB_G0288799"/>
<dbReference type="dictyBase" id="DDB_G0288799">
    <property type="gene designation" value="mrpl21"/>
</dbReference>
<dbReference type="VEuPathDB" id="AmoebaDB:DDB_G0288799"/>
<dbReference type="eggNOG" id="KOG1686">
    <property type="taxonomic scope" value="Eukaryota"/>
</dbReference>
<dbReference type="HOGENOM" id="CLU_061463_3_0_1"/>
<dbReference type="InParanoid" id="Q54IF0"/>
<dbReference type="OMA" id="HVTIFKH"/>
<dbReference type="PhylomeDB" id="Q54IF0"/>
<dbReference type="PRO" id="PR:Q54IF0"/>
<dbReference type="Proteomes" id="UP000002195">
    <property type="component" value="Chromosome 5"/>
</dbReference>
<dbReference type="GO" id="GO:0005762">
    <property type="term" value="C:mitochondrial large ribosomal subunit"/>
    <property type="evidence" value="ECO:0000318"/>
    <property type="project" value="GO_Central"/>
</dbReference>
<dbReference type="GO" id="GO:0003723">
    <property type="term" value="F:RNA binding"/>
    <property type="evidence" value="ECO:0007669"/>
    <property type="project" value="InterPro"/>
</dbReference>
<dbReference type="GO" id="GO:0003735">
    <property type="term" value="F:structural constituent of ribosome"/>
    <property type="evidence" value="ECO:0000318"/>
    <property type="project" value="GO_Central"/>
</dbReference>
<dbReference type="GO" id="GO:0006412">
    <property type="term" value="P:translation"/>
    <property type="evidence" value="ECO:0007669"/>
    <property type="project" value="InterPro"/>
</dbReference>
<dbReference type="HAMAP" id="MF_01363">
    <property type="entry name" value="Ribosomal_bL21"/>
    <property type="match status" value="1"/>
</dbReference>
<dbReference type="InterPro" id="IPR028909">
    <property type="entry name" value="bL21-like"/>
</dbReference>
<dbReference type="InterPro" id="IPR036164">
    <property type="entry name" value="bL21-like_sf"/>
</dbReference>
<dbReference type="InterPro" id="IPR001787">
    <property type="entry name" value="Ribosomal_bL21"/>
</dbReference>
<dbReference type="NCBIfam" id="TIGR00061">
    <property type="entry name" value="L21"/>
    <property type="match status" value="1"/>
</dbReference>
<dbReference type="PANTHER" id="PTHR21349">
    <property type="entry name" value="50S RIBOSOMAL PROTEIN L21"/>
    <property type="match status" value="1"/>
</dbReference>
<dbReference type="PANTHER" id="PTHR21349:SF0">
    <property type="entry name" value="LARGE RIBOSOMAL SUBUNIT PROTEIN BL21M"/>
    <property type="match status" value="1"/>
</dbReference>
<dbReference type="Pfam" id="PF00829">
    <property type="entry name" value="Ribosomal_L21p"/>
    <property type="match status" value="1"/>
</dbReference>
<dbReference type="SUPFAM" id="SSF141091">
    <property type="entry name" value="L21p-like"/>
    <property type="match status" value="1"/>
</dbReference>
<proteinExistence type="inferred from homology"/>